<comment type="function">
    <text evidence="1">Forms an efflux pump with AaeB.</text>
</comment>
<comment type="subcellular location">
    <subcellularLocation>
        <location evidence="1">Cell inner membrane</location>
        <topology evidence="1">Single-pass membrane protein</topology>
    </subcellularLocation>
</comment>
<comment type="induction">
    <text evidence="1">Positively coregulated with aaeB and aaeX by AaeR.</text>
</comment>
<comment type="similarity">
    <text evidence="1">Belongs to the membrane fusion protein (MFP) (TC 8.A.1) family.</text>
</comment>
<proteinExistence type="inferred from homology"/>
<gene>
    <name evidence="1" type="primary">aaeA</name>
    <name type="ordered locus">BWG_2942</name>
</gene>
<accession>C4ZSX9</accession>
<reference key="1">
    <citation type="journal article" date="2009" name="J. Bacteriol.">
        <title>Genomic sequencing reveals regulatory mutations and recombinational events in the widely used MC4100 lineage of Escherichia coli K-12.</title>
        <authorList>
            <person name="Ferenci T."/>
            <person name="Zhou Z."/>
            <person name="Betteridge T."/>
            <person name="Ren Y."/>
            <person name="Liu Y."/>
            <person name="Feng L."/>
            <person name="Reeves P.R."/>
            <person name="Wang L."/>
        </authorList>
    </citation>
    <scope>NUCLEOTIDE SEQUENCE [LARGE SCALE GENOMIC DNA]</scope>
    <source>
        <strain>K12 / MC4100 / BW2952</strain>
    </source>
</reference>
<dbReference type="EMBL" id="CP001396">
    <property type="protein sequence ID" value="ACR64067.1"/>
    <property type="molecule type" value="Genomic_DNA"/>
</dbReference>
<dbReference type="RefSeq" id="WP_000854021.1">
    <property type="nucleotide sequence ID" value="NC_012759.1"/>
</dbReference>
<dbReference type="SMR" id="C4ZSX9"/>
<dbReference type="GeneID" id="75206091"/>
<dbReference type="KEGG" id="ebw:BWG_2942"/>
<dbReference type="HOGENOM" id="CLU_018816_15_2_6"/>
<dbReference type="GO" id="GO:0005886">
    <property type="term" value="C:plasma membrane"/>
    <property type="evidence" value="ECO:0007669"/>
    <property type="project" value="UniProtKB-SubCell"/>
</dbReference>
<dbReference type="GO" id="GO:0022857">
    <property type="term" value="F:transmembrane transporter activity"/>
    <property type="evidence" value="ECO:0007669"/>
    <property type="project" value="UniProtKB-UniRule"/>
</dbReference>
<dbReference type="FunFam" id="2.40.30.170:FF:000002">
    <property type="entry name" value="p-hydroxybenzoic acid efflux pump subunit AaeA"/>
    <property type="match status" value="1"/>
</dbReference>
<dbReference type="FunFam" id="2.40.50.100:FF:000018">
    <property type="entry name" value="p-hydroxybenzoic acid efflux pump subunit AaeA"/>
    <property type="match status" value="1"/>
</dbReference>
<dbReference type="Gene3D" id="2.40.30.170">
    <property type="match status" value="1"/>
</dbReference>
<dbReference type="Gene3D" id="2.40.50.100">
    <property type="match status" value="1"/>
</dbReference>
<dbReference type="HAMAP" id="MF_01544">
    <property type="entry name" value="AaeA"/>
    <property type="match status" value="1"/>
</dbReference>
<dbReference type="InterPro" id="IPR043602">
    <property type="entry name" value="CusB-like_dom_1"/>
</dbReference>
<dbReference type="InterPro" id="IPR032317">
    <property type="entry name" value="CusB_D23"/>
</dbReference>
<dbReference type="InterPro" id="IPR050393">
    <property type="entry name" value="MFP_Efflux_Pump"/>
</dbReference>
<dbReference type="InterPro" id="IPR022871">
    <property type="entry name" value="PHBA_efflux_pump_AaeA"/>
</dbReference>
<dbReference type="InterPro" id="IPR006143">
    <property type="entry name" value="RND_pump_MFP"/>
</dbReference>
<dbReference type="NCBIfam" id="NF007850">
    <property type="entry name" value="PRK10559.1"/>
    <property type="match status" value="1"/>
</dbReference>
<dbReference type="NCBIfam" id="TIGR01730">
    <property type="entry name" value="RND_mfp"/>
    <property type="match status" value="1"/>
</dbReference>
<dbReference type="PANTHER" id="PTHR30367:SF12">
    <property type="entry name" value="P-HYDROXYBENZOIC ACID EFFLUX PUMP SUBUNIT AAEA"/>
    <property type="match status" value="1"/>
</dbReference>
<dbReference type="PANTHER" id="PTHR30367">
    <property type="entry name" value="P-HYDROXYBENZOIC ACID EFFLUX PUMP SUBUNIT AAEA-RELATED"/>
    <property type="match status" value="1"/>
</dbReference>
<dbReference type="Pfam" id="PF00529">
    <property type="entry name" value="CusB_dom_1"/>
    <property type="match status" value="1"/>
</dbReference>
<dbReference type="Pfam" id="PF16576">
    <property type="entry name" value="HlyD_D23"/>
    <property type="match status" value="1"/>
</dbReference>
<dbReference type="SUPFAM" id="SSF111369">
    <property type="entry name" value="HlyD-like secretion proteins"/>
    <property type="match status" value="1"/>
</dbReference>
<protein>
    <recommendedName>
        <fullName evidence="1">p-hydroxybenzoic acid efflux pump subunit AaeA</fullName>
        <shortName evidence="1">pHBA efflux pump protein A</shortName>
    </recommendedName>
</protein>
<sequence>MKTLIRKFSRTAITVVLVILAFIAIFNAWVYYTESPWTRDARFSADVVAIAPDVSGLITQVNVHDNQLVKKGQILFTIDQPRYQKALEEAQADVAYYQVLAQEKRQEAGRRNRLGVQAMSREEIDQANNVLQTVLHQLAKAQATRDLAKLDLERTVIRAPADGWVTNLNVYTGEFITRGSTAVALVKQNSFYVLAYMEETKLEGVRPGYRAEITPLGSNKVLKGTVDSVAAGVTNASSTRDDKGMATIDSNLEWVRLAQRVPVRIRLDNQQENIWPAGTTATVVVTGKQDRDESQDSFFRKMAHRLREFG</sequence>
<evidence type="ECO:0000255" key="1">
    <source>
        <dbReference type="HAMAP-Rule" id="MF_01544"/>
    </source>
</evidence>
<feature type="chain" id="PRO_1000215440" description="p-hydroxybenzoic acid efflux pump subunit AaeA">
    <location>
        <begin position="1"/>
        <end position="310"/>
    </location>
</feature>
<feature type="transmembrane region" description="Helical" evidence="1">
    <location>
        <begin position="12"/>
        <end position="32"/>
    </location>
</feature>
<name>AAEA_ECOBW</name>
<organism>
    <name type="scientific">Escherichia coli (strain K12 / MC4100 / BW2952)</name>
    <dbReference type="NCBI Taxonomy" id="595496"/>
    <lineage>
        <taxon>Bacteria</taxon>
        <taxon>Pseudomonadati</taxon>
        <taxon>Pseudomonadota</taxon>
        <taxon>Gammaproteobacteria</taxon>
        <taxon>Enterobacterales</taxon>
        <taxon>Enterobacteriaceae</taxon>
        <taxon>Escherichia</taxon>
    </lineage>
</organism>
<keyword id="KW-0997">Cell inner membrane</keyword>
<keyword id="KW-1003">Cell membrane</keyword>
<keyword id="KW-0472">Membrane</keyword>
<keyword id="KW-0812">Transmembrane</keyword>
<keyword id="KW-1133">Transmembrane helix</keyword>
<keyword id="KW-0813">Transport</keyword>